<comment type="subcellular location">
    <subcellularLocation>
        <location evidence="3">Secreted</location>
    </subcellularLocation>
</comment>
<comment type="tissue specificity">
    <text evidence="3">Expressed by the venom duct.</text>
</comment>
<comment type="domain">
    <text evidence="3">The cysteine framework is XIV (C-C-C-C).</text>
</comment>
<comment type="PTM">
    <text evidence="3">Contains 2 disulfide bond.</text>
</comment>
<keyword id="KW-1015">Disulfide bond</keyword>
<keyword id="KW-0528">Neurotoxin</keyword>
<keyword id="KW-0964">Secreted</keyword>
<keyword id="KW-0800">Toxin</keyword>
<dbReference type="EMBL" id="FJ959126">
    <property type="protein sequence ID" value="ADB93096.1"/>
    <property type="molecule type" value="Genomic_DNA"/>
</dbReference>
<dbReference type="ConoServer" id="4012">
    <property type="toxin name" value="Cal14.10 precursor"/>
</dbReference>
<dbReference type="GO" id="GO:0005576">
    <property type="term" value="C:extracellular region"/>
    <property type="evidence" value="ECO:0007669"/>
    <property type="project" value="UniProtKB-SubCell"/>
</dbReference>
<dbReference type="GO" id="GO:0090729">
    <property type="term" value="F:toxin activity"/>
    <property type="evidence" value="ECO:0007669"/>
    <property type="project" value="UniProtKB-KW"/>
</dbReference>
<sequence>NERHVTCFYVKFGCKHTECITTIVFCWQTASDISSV</sequence>
<reference key="1">
    <citation type="journal article" date="2010" name="Mol. Phylogenet. Evol.">
        <title>Evolution of Conus peptide toxins: analysis of Conus californicus Reeve, 1844.</title>
        <authorList>
            <person name="Biggs J.S."/>
            <person name="Watkins M."/>
            <person name="Puillandre N."/>
            <person name="Ownby J.P."/>
            <person name="Lopez-Vera E."/>
            <person name="Christensen S."/>
            <person name="Moreno K.J."/>
            <person name="Bernaldez J."/>
            <person name="Licea-Navarro A."/>
            <person name="Corneli P.S."/>
            <person name="Olivera B.M."/>
        </authorList>
    </citation>
    <scope>NUCLEOTIDE SEQUENCE [GENOMIC DNA]</scope>
</reference>
<evidence type="ECO:0000250" key="1"/>
<evidence type="ECO:0000303" key="2">
    <source>
    </source>
</evidence>
<evidence type="ECO:0000305" key="3"/>
<evidence type="ECO:0000305" key="4">
    <source>
    </source>
</evidence>
<feature type="propeptide" id="PRO_0000415031" evidence="1">
    <location>
        <begin position="1" status="less than"/>
        <end position="2"/>
    </location>
</feature>
<feature type="peptide" id="PRO_0000415032" description="Conotoxin Cl14.10" evidence="4">
    <location>
        <begin position="4"/>
        <end position="36"/>
    </location>
</feature>
<feature type="non-terminal residue" evidence="4">
    <location>
        <position position="1"/>
    </location>
</feature>
<accession>D6C4I4</accession>
<proteinExistence type="inferred from homology"/>
<name>CUEA_CONCL</name>
<organism>
    <name type="scientific">Californiconus californicus</name>
    <name type="common">California cone</name>
    <name type="synonym">Conus californicus</name>
    <dbReference type="NCBI Taxonomy" id="1736779"/>
    <lineage>
        <taxon>Eukaryota</taxon>
        <taxon>Metazoa</taxon>
        <taxon>Spiralia</taxon>
        <taxon>Lophotrochozoa</taxon>
        <taxon>Mollusca</taxon>
        <taxon>Gastropoda</taxon>
        <taxon>Caenogastropoda</taxon>
        <taxon>Neogastropoda</taxon>
        <taxon>Conoidea</taxon>
        <taxon>Conidae</taxon>
        <taxon>Californiconus</taxon>
    </lineage>
</organism>
<protein>
    <recommendedName>
        <fullName evidence="2">Conotoxin Cl14.10</fullName>
    </recommendedName>
</protein>